<sequence length="273" mass="29413">MMAARMMAAGLAATALSAHAFRIPTPGEQDARIQTVPYHPEEVVLVRAWNGYVTRIVFDEQEKIIDVAAGFADGWQFSPEGNVLYIKAKSFPAQGSPAQAPEPGLWNTNLLVKTDRRLYDFDLVLASADAATPQALQRSRMAYRLQFRYPAAPQAASRASPVGPAVPAGALNRRYAMQVGNGSDGIAPIAAYDDGRHTWLTFRPGQPFPAVFAVAPDGTETLVNLHIDNQSLVIHRVAPVLMLRSGASVIRIVNQNGDASASPAFECHAEPAL</sequence>
<reference key="1">
    <citation type="journal article" date="2003" name="Nat. Genet.">
        <title>Comparative analysis of the genome sequences of Bordetella pertussis, Bordetella parapertussis and Bordetella bronchiseptica.</title>
        <authorList>
            <person name="Parkhill J."/>
            <person name="Sebaihia M."/>
            <person name="Preston A."/>
            <person name="Murphy L.D."/>
            <person name="Thomson N.R."/>
            <person name="Harris D.E."/>
            <person name="Holden M.T.G."/>
            <person name="Churcher C.M."/>
            <person name="Bentley S.D."/>
            <person name="Mungall K.L."/>
            <person name="Cerdeno-Tarraga A.-M."/>
            <person name="Temple L."/>
            <person name="James K.D."/>
            <person name="Harris B."/>
            <person name="Quail M.A."/>
            <person name="Achtman M."/>
            <person name="Atkin R."/>
            <person name="Baker S."/>
            <person name="Basham D."/>
            <person name="Bason N."/>
            <person name="Cherevach I."/>
            <person name="Chillingworth T."/>
            <person name="Collins M."/>
            <person name="Cronin A."/>
            <person name="Davis P."/>
            <person name="Doggett J."/>
            <person name="Feltwell T."/>
            <person name="Goble A."/>
            <person name="Hamlin N."/>
            <person name="Hauser H."/>
            <person name="Holroyd S."/>
            <person name="Jagels K."/>
            <person name="Leather S."/>
            <person name="Moule S."/>
            <person name="Norberczak H."/>
            <person name="O'Neil S."/>
            <person name="Ormond D."/>
            <person name="Price C."/>
            <person name="Rabbinowitsch E."/>
            <person name="Rutter S."/>
            <person name="Sanders M."/>
            <person name="Saunders D."/>
            <person name="Seeger K."/>
            <person name="Sharp S."/>
            <person name="Simmonds M."/>
            <person name="Skelton J."/>
            <person name="Squares R."/>
            <person name="Squares S."/>
            <person name="Stevens K."/>
            <person name="Unwin L."/>
            <person name="Whitehead S."/>
            <person name="Barrell B.G."/>
            <person name="Maskell D.J."/>
        </authorList>
    </citation>
    <scope>NUCLEOTIDE SEQUENCE [LARGE SCALE GENOMIC DNA]</scope>
    <source>
        <strain>12822 / ATCC BAA-587 / NCTC 13253</strain>
    </source>
</reference>
<reference key="2">
    <citation type="journal article" date="1987" name="J. Bacteriol.">
        <title>Bordetella parapertussis and Bordetella bronchiseptica contain transcriptionally silent pertussis toxin genes.</title>
        <authorList>
            <person name="Arico B."/>
            <person name="Rappuoli R."/>
        </authorList>
    </citation>
    <scope>TRANSCRIPTIONAL SILENCING</scope>
    <source>
        <strain>ATCC 9305</strain>
    </source>
</reference>
<reference key="3">
    <citation type="journal article" date="1996" name="Infect. Immun.">
        <title>Analysis of proteins encoded by the ptx and ptl genes of Bordetella bronchiseptica and Bordetella parapertussis.</title>
        <authorList>
            <person name="Hausman S.Z."/>
            <person name="Cherry J.D."/>
            <person name="Heininger U."/>
            <person name="Wirsing von Koenig C.H."/>
            <person name="Burns D.L."/>
        </authorList>
    </citation>
    <scope>IN VITRO EXPRESSION FROM A B.PERTUSSIS PROMOTER</scope>
    <source>
        <strain>10978</strain>
        <strain>13449</strain>
    </source>
</reference>
<keyword id="KW-0998">Cell outer membrane</keyword>
<keyword id="KW-0472">Membrane</keyword>
<keyword id="KW-0732">Signal</keyword>
<feature type="signal peptide" evidence="1">
    <location>
        <begin position="1"/>
        <end position="20"/>
    </location>
</feature>
<feature type="chain" id="PRO_0000287414" description="Type IV secretion system protein PtlF homolog">
    <location>
        <begin position="21"/>
        <end position="273"/>
    </location>
</feature>
<dbReference type="EMBL" id="BX640436">
    <property type="protein sequence ID" value="CAE39593.1"/>
    <property type="molecule type" value="Genomic_DNA"/>
</dbReference>
<dbReference type="RefSeq" id="WP_003815863.1">
    <property type="nucleotide sequence ID" value="NC_002928.3"/>
</dbReference>
<dbReference type="SMR" id="Q7W2T9"/>
<dbReference type="GeneID" id="93206113"/>
<dbReference type="KEGG" id="bpa:BPP4314"/>
<dbReference type="HOGENOM" id="CLU_058585_3_0_4"/>
<dbReference type="Proteomes" id="UP000001421">
    <property type="component" value="Chromosome"/>
</dbReference>
<dbReference type="GO" id="GO:0009279">
    <property type="term" value="C:cell outer membrane"/>
    <property type="evidence" value="ECO:0007669"/>
    <property type="project" value="UniProtKB-SubCell"/>
</dbReference>
<dbReference type="CDD" id="cd06911">
    <property type="entry name" value="VirB9_CagX_TrbG"/>
    <property type="match status" value="1"/>
</dbReference>
<dbReference type="Gene3D" id="2.60.40.2500">
    <property type="match status" value="1"/>
</dbReference>
<dbReference type="InterPro" id="IPR010258">
    <property type="entry name" value="Conjugal_tfr_TrbG/VirB9/CagX"/>
</dbReference>
<dbReference type="InterPro" id="IPR014148">
    <property type="entry name" value="VirB9"/>
</dbReference>
<dbReference type="InterPro" id="IPR033645">
    <property type="entry name" value="VirB9/CagX/TrbG_C"/>
</dbReference>
<dbReference type="InterPro" id="IPR038161">
    <property type="entry name" value="VirB9/CagX/TrbG_C_sf"/>
</dbReference>
<dbReference type="NCBIfam" id="TIGR02781">
    <property type="entry name" value="VirB9"/>
    <property type="match status" value="1"/>
</dbReference>
<dbReference type="Pfam" id="PF03524">
    <property type="entry name" value="CagX"/>
    <property type="match status" value="1"/>
</dbReference>
<gene>
    <name type="primary">ptlF</name>
    <name type="ordered locus">BPP4314</name>
</gene>
<proteinExistence type="inferred from homology"/>
<comment type="subcellular location">
    <subcellularLocation>
        <location evidence="2">Cell outer membrane</location>
    </subcellularLocation>
</comment>
<comment type="miscellaneous">
    <text>B.parapertussis strain 10978 harboring a functional ptx-ptl promoter from B.pertussis produces the PtlF protein in a stable form. Is also able, but less efficiently, to produce and secrete the pertussis toxin (PTX).</text>
</comment>
<comment type="similarity">
    <text evidence="2">Belongs to the TrbG/VirB9 family.</text>
</comment>
<comment type="caution">
    <text evidence="2">B.parapertussis and B.bronchiseptica seem not to produce the pertussis toxin (S1, S2, S4, S5 and S3) and ptl proteins (PtlA, PtlB, PtlC, PtlD, PtlE, PtlF, PtlG, PtlH and PtlI) in vivo due to changes in the promoter region of the ptx-ptl operon. However, it is possible that their promoter is active under certain, as-yet-undefined conditions and that B.parapertussis and B.bronchiseptica are therefore capable of producing these proteins.</text>
</comment>
<evidence type="ECO:0000255" key="1"/>
<evidence type="ECO:0000305" key="2"/>
<organism>
    <name type="scientific">Bordetella parapertussis (strain 12822 / ATCC BAA-587 / NCTC 13253)</name>
    <dbReference type="NCBI Taxonomy" id="257311"/>
    <lineage>
        <taxon>Bacteria</taxon>
        <taxon>Pseudomonadati</taxon>
        <taxon>Pseudomonadota</taxon>
        <taxon>Betaproteobacteria</taxon>
        <taxon>Burkholderiales</taxon>
        <taxon>Alcaligenaceae</taxon>
        <taxon>Bordetella</taxon>
    </lineage>
</organism>
<protein>
    <recommendedName>
        <fullName>Type IV secretion system protein PtlF homolog</fullName>
    </recommendedName>
</protein>
<accession>Q7W2T9</accession>
<name>PTLF_BORPA</name>